<organism>
    <name type="scientific">Ipomoea aquatica</name>
    <name type="common">Water spinach</name>
    <name type="synonym">Ipomoea reptans</name>
    <dbReference type="NCBI Taxonomy" id="89636"/>
    <lineage>
        <taxon>Eukaryota</taxon>
        <taxon>Viridiplantae</taxon>
        <taxon>Streptophyta</taxon>
        <taxon>Embryophyta</taxon>
        <taxon>Tracheophyta</taxon>
        <taxon>Spermatophyta</taxon>
        <taxon>Magnoliopsida</taxon>
        <taxon>eudicotyledons</taxon>
        <taxon>Gunneridae</taxon>
        <taxon>Pentapetalae</taxon>
        <taxon>asterids</taxon>
        <taxon>lamiids</taxon>
        <taxon>Solanales</taxon>
        <taxon>Convolvulaceae</taxon>
        <taxon>Ipomoeeae</taxon>
        <taxon>Ipomoea</taxon>
    </lineage>
</organism>
<geneLocation type="chloroplast"/>
<name>ATPB_IPOAQ</name>
<protein>
    <recommendedName>
        <fullName evidence="1">ATP synthase subunit beta, chloroplastic</fullName>
        <ecNumber evidence="1">7.1.2.2</ecNumber>
    </recommendedName>
    <alternativeName>
        <fullName evidence="1">ATP synthase F1 sector subunit beta</fullName>
    </alternativeName>
    <alternativeName>
        <fullName evidence="1">F-ATPase subunit beta</fullName>
    </alternativeName>
</protein>
<keyword id="KW-0066">ATP synthesis</keyword>
<keyword id="KW-0067">ATP-binding</keyword>
<keyword id="KW-0139">CF(1)</keyword>
<keyword id="KW-0150">Chloroplast</keyword>
<keyword id="KW-0375">Hydrogen ion transport</keyword>
<keyword id="KW-0406">Ion transport</keyword>
<keyword id="KW-0472">Membrane</keyword>
<keyword id="KW-0547">Nucleotide-binding</keyword>
<keyword id="KW-0934">Plastid</keyword>
<keyword id="KW-0793">Thylakoid</keyword>
<keyword id="KW-1278">Translocase</keyword>
<keyword id="KW-0813">Transport</keyword>
<evidence type="ECO:0000255" key="1">
    <source>
        <dbReference type="HAMAP-Rule" id="MF_01347"/>
    </source>
</evidence>
<accession>Q8MBQ1</accession>
<dbReference type="EC" id="7.1.2.2" evidence="1"/>
<dbReference type="EMBL" id="AY100749">
    <property type="protein sequence ID" value="AAM52103.1"/>
    <property type="molecule type" value="Genomic_DNA"/>
</dbReference>
<dbReference type="RefSeq" id="YP_010128503.1">
    <property type="nucleotide sequence ID" value="NC_056300.1"/>
</dbReference>
<dbReference type="SMR" id="Q8MBQ1"/>
<dbReference type="GeneID" id="65335546"/>
<dbReference type="GO" id="GO:0009535">
    <property type="term" value="C:chloroplast thylakoid membrane"/>
    <property type="evidence" value="ECO:0007669"/>
    <property type="project" value="UniProtKB-SubCell"/>
</dbReference>
<dbReference type="GO" id="GO:0005739">
    <property type="term" value="C:mitochondrion"/>
    <property type="evidence" value="ECO:0007669"/>
    <property type="project" value="GOC"/>
</dbReference>
<dbReference type="GO" id="GO:0045259">
    <property type="term" value="C:proton-transporting ATP synthase complex"/>
    <property type="evidence" value="ECO:0007669"/>
    <property type="project" value="UniProtKB-KW"/>
</dbReference>
<dbReference type="GO" id="GO:0005524">
    <property type="term" value="F:ATP binding"/>
    <property type="evidence" value="ECO:0007669"/>
    <property type="project" value="UniProtKB-UniRule"/>
</dbReference>
<dbReference type="GO" id="GO:0016887">
    <property type="term" value="F:ATP hydrolysis activity"/>
    <property type="evidence" value="ECO:0007669"/>
    <property type="project" value="InterPro"/>
</dbReference>
<dbReference type="GO" id="GO:0046933">
    <property type="term" value="F:proton-transporting ATP synthase activity, rotational mechanism"/>
    <property type="evidence" value="ECO:0007669"/>
    <property type="project" value="UniProtKB-UniRule"/>
</dbReference>
<dbReference type="GO" id="GO:0042776">
    <property type="term" value="P:proton motive force-driven mitochondrial ATP synthesis"/>
    <property type="evidence" value="ECO:0007669"/>
    <property type="project" value="TreeGrafter"/>
</dbReference>
<dbReference type="CDD" id="cd18110">
    <property type="entry name" value="ATP-synt_F1_beta_C"/>
    <property type="match status" value="1"/>
</dbReference>
<dbReference type="CDD" id="cd18115">
    <property type="entry name" value="ATP-synt_F1_beta_N"/>
    <property type="match status" value="1"/>
</dbReference>
<dbReference type="CDD" id="cd01133">
    <property type="entry name" value="F1-ATPase_beta_CD"/>
    <property type="match status" value="1"/>
</dbReference>
<dbReference type="FunFam" id="1.10.1140.10:FF:000001">
    <property type="entry name" value="ATP synthase subunit beta"/>
    <property type="match status" value="1"/>
</dbReference>
<dbReference type="FunFam" id="3.40.50.12240:FF:000006">
    <property type="entry name" value="ATP synthase subunit beta"/>
    <property type="match status" value="1"/>
</dbReference>
<dbReference type="FunFam" id="3.40.50.300:FF:000004">
    <property type="entry name" value="ATP synthase subunit beta"/>
    <property type="match status" value="1"/>
</dbReference>
<dbReference type="FunFam" id="2.40.10.170:FF:000002">
    <property type="entry name" value="ATP synthase subunit beta, chloroplastic"/>
    <property type="match status" value="1"/>
</dbReference>
<dbReference type="Gene3D" id="2.40.10.170">
    <property type="match status" value="1"/>
</dbReference>
<dbReference type="Gene3D" id="1.10.1140.10">
    <property type="entry name" value="Bovine Mitochondrial F1-atpase, Atp Synthase Beta Chain, Chain D, domain 3"/>
    <property type="match status" value="1"/>
</dbReference>
<dbReference type="Gene3D" id="3.40.50.300">
    <property type="entry name" value="P-loop containing nucleotide triphosphate hydrolases"/>
    <property type="match status" value="1"/>
</dbReference>
<dbReference type="HAMAP" id="MF_01347">
    <property type="entry name" value="ATP_synth_beta_bact"/>
    <property type="match status" value="1"/>
</dbReference>
<dbReference type="InterPro" id="IPR003593">
    <property type="entry name" value="AAA+_ATPase"/>
</dbReference>
<dbReference type="InterPro" id="IPR055190">
    <property type="entry name" value="ATP-synt_VA_C"/>
</dbReference>
<dbReference type="InterPro" id="IPR005722">
    <property type="entry name" value="ATP_synth_F1_bsu"/>
</dbReference>
<dbReference type="InterPro" id="IPR020003">
    <property type="entry name" value="ATPase_a/bsu_AS"/>
</dbReference>
<dbReference type="InterPro" id="IPR050053">
    <property type="entry name" value="ATPase_alpha/beta_chains"/>
</dbReference>
<dbReference type="InterPro" id="IPR004100">
    <property type="entry name" value="ATPase_F1/V1/A1_a/bsu_N"/>
</dbReference>
<dbReference type="InterPro" id="IPR036121">
    <property type="entry name" value="ATPase_F1/V1/A1_a/bsu_N_sf"/>
</dbReference>
<dbReference type="InterPro" id="IPR000194">
    <property type="entry name" value="ATPase_F1/V1/A1_a/bsu_nucl-bd"/>
</dbReference>
<dbReference type="InterPro" id="IPR024034">
    <property type="entry name" value="ATPase_F1/V1_b/a_C"/>
</dbReference>
<dbReference type="InterPro" id="IPR027417">
    <property type="entry name" value="P-loop_NTPase"/>
</dbReference>
<dbReference type="NCBIfam" id="TIGR01039">
    <property type="entry name" value="atpD"/>
    <property type="match status" value="1"/>
</dbReference>
<dbReference type="PANTHER" id="PTHR15184">
    <property type="entry name" value="ATP SYNTHASE"/>
    <property type="match status" value="1"/>
</dbReference>
<dbReference type="PANTHER" id="PTHR15184:SF71">
    <property type="entry name" value="ATP SYNTHASE SUBUNIT BETA, MITOCHONDRIAL"/>
    <property type="match status" value="1"/>
</dbReference>
<dbReference type="Pfam" id="PF00006">
    <property type="entry name" value="ATP-synt_ab"/>
    <property type="match status" value="1"/>
</dbReference>
<dbReference type="Pfam" id="PF02874">
    <property type="entry name" value="ATP-synt_ab_N"/>
    <property type="match status" value="1"/>
</dbReference>
<dbReference type="Pfam" id="PF22919">
    <property type="entry name" value="ATP-synt_VA_C"/>
    <property type="match status" value="1"/>
</dbReference>
<dbReference type="SMART" id="SM00382">
    <property type="entry name" value="AAA"/>
    <property type="match status" value="1"/>
</dbReference>
<dbReference type="SUPFAM" id="SSF47917">
    <property type="entry name" value="C-terminal domain of alpha and beta subunits of F1 ATP synthase"/>
    <property type="match status" value="1"/>
</dbReference>
<dbReference type="SUPFAM" id="SSF50615">
    <property type="entry name" value="N-terminal domain of alpha and beta subunits of F1 ATP synthase"/>
    <property type="match status" value="1"/>
</dbReference>
<dbReference type="SUPFAM" id="SSF52540">
    <property type="entry name" value="P-loop containing nucleoside triphosphate hydrolases"/>
    <property type="match status" value="1"/>
</dbReference>
<dbReference type="PROSITE" id="PS00152">
    <property type="entry name" value="ATPASE_ALPHA_BETA"/>
    <property type="match status" value="1"/>
</dbReference>
<comment type="function">
    <text evidence="1">Produces ATP from ADP in the presence of a proton gradient across the membrane. The catalytic sites are hosted primarily by the beta subunits.</text>
</comment>
<comment type="catalytic activity">
    <reaction evidence="1">
        <text>ATP + H2O + 4 H(+)(in) = ADP + phosphate + 5 H(+)(out)</text>
        <dbReference type="Rhea" id="RHEA:57720"/>
        <dbReference type="ChEBI" id="CHEBI:15377"/>
        <dbReference type="ChEBI" id="CHEBI:15378"/>
        <dbReference type="ChEBI" id="CHEBI:30616"/>
        <dbReference type="ChEBI" id="CHEBI:43474"/>
        <dbReference type="ChEBI" id="CHEBI:456216"/>
        <dbReference type="EC" id="7.1.2.2"/>
    </reaction>
</comment>
<comment type="subunit">
    <text evidence="1">F-type ATPases have 2 components, CF(1) - the catalytic core - and CF(0) - the membrane proton channel. CF(1) has five subunits: alpha(3), beta(3), gamma(1), delta(1), epsilon(1). CF(0) has four main subunits: a(1), b(1), b'(1) and c(9-12).</text>
</comment>
<comment type="subcellular location">
    <subcellularLocation>
        <location evidence="1">Plastid</location>
        <location evidence="1">Chloroplast thylakoid membrane</location>
        <topology evidence="1">Peripheral membrane protein</topology>
    </subcellularLocation>
</comment>
<comment type="similarity">
    <text evidence="1">Belongs to the ATPase alpha/beta chains family.</text>
</comment>
<reference key="1">
    <citation type="journal article" date="2002" name="Am. J. Bot.">
        <title>Monophyly of the Convolvulaceae and circumscription of their major lineages based on DNA sequences of multiple chloroplast loci.</title>
        <authorList>
            <person name="Stefanovic S."/>
            <person name="Krueger L."/>
            <person name="Olmstead R.G."/>
        </authorList>
        <dbReference type="AGRICOLA" id="IND23320510"/>
    </citation>
    <scope>NUCLEOTIDE SEQUENCE [GENOMIC DNA]</scope>
</reference>
<sequence>MRINPTTSGSEVSTVEKKNLGRIVKIIGPVLDVAFPPGKMPNIYNALVVQGRDNEQTNVTCEVQQLLGNNRVRAVAMSDTDGLMRGMEVSDTGAPISVPVGGSTLGRIFNVLGQPVDNLGPVDTNTTSPIHRSAPAFIQLDTKLSIFETGIKVVDLLAPYRRGGKIGLFGGAGVGKTVLIMELINNIAKAHGGVSVFGGVGERTREGNDLYLEMKESGVINEENIPESKVALVYGQMNEPPGARMRVGLTALTMAEYFRDVNEQDVLLFIDNIFRFVQAGSEVSALLGRMPSAVGYQPTLSTEMGSLQERITSTKEGSITSIQAVYVPADDLTDPAPATTFAHLDATTVLSRGLAAKGIYPAVDPLDSTSTMLQPRIVGEEHYETAQRVKQTLQRYKELQDIIAILGLDELSEEDRLTVARARKIERFLSQPFFVAEVFTGSPGKYVGLAETIRGFQLILSGELDGLPEQAFYLVGNIDEATAKAMNLKT</sequence>
<gene>
    <name evidence="1" type="primary">atpB</name>
</gene>
<feature type="chain" id="PRO_0000254486" description="ATP synthase subunit beta, chloroplastic">
    <location>
        <begin position="1"/>
        <end position="490"/>
    </location>
</feature>
<feature type="binding site" evidence="1">
    <location>
        <begin position="170"/>
        <end position="177"/>
    </location>
    <ligand>
        <name>ATP</name>
        <dbReference type="ChEBI" id="CHEBI:30616"/>
    </ligand>
</feature>
<proteinExistence type="inferred from homology"/>